<accession>B1IQC2</accession>
<name>RSXE_ECOLC</name>
<feature type="chain" id="PRO_1000081262" description="Ion-translocating oxidoreductase complex subunit E">
    <location>
        <begin position="1"/>
        <end position="231"/>
    </location>
</feature>
<feature type="transmembrane region" description="Helical" evidence="1">
    <location>
        <begin position="18"/>
        <end position="38"/>
    </location>
</feature>
<feature type="transmembrane region" description="Helical" evidence="1">
    <location>
        <begin position="39"/>
        <end position="59"/>
    </location>
</feature>
<feature type="transmembrane region" description="Helical" evidence="1">
    <location>
        <begin position="63"/>
        <end position="83"/>
    </location>
</feature>
<feature type="transmembrane region" description="Helical" evidence="1">
    <location>
        <begin position="86"/>
        <end position="106"/>
    </location>
</feature>
<feature type="transmembrane region" description="Helical" evidence="1">
    <location>
        <begin position="125"/>
        <end position="145"/>
    </location>
</feature>
<feature type="transmembrane region" description="Helical" evidence="1">
    <location>
        <begin position="182"/>
        <end position="202"/>
    </location>
</feature>
<protein>
    <recommendedName>
        <fullName evidence="1">Ion-translocating oxidoreductase complex subunit E</fullName>
        <ecNumber evidence="1">7.-.-.-</ecNumber>
    </recommendedName>
    <alternativeName>
        <fullName evidence="1">Rsx electron transport complex subunit E</fullName>
    </alternativeName>
</protein>
<keyword id="KW-0997">Cell inner membrane</keyword>
<keyword id="KW-1003">Cell membrane</keyword>
<keyword id="KW-0249">Electron transport</keyword>
<keyword id="KW-0472">Membrane</keyword>
<keyword id="KW-1278">Translocase</keyword>
<keyword id="KW-0812">Transmembrane</keyword>
<keyword id="KW-1133">Transmembrane helix</keyword>
<keyword id="KW-0813">Transport</keyword>
<comment type="function">
    <text evidence="1">Part of a membrane-bound complex that couples electron transfer with translocation of ions across the membrane. Required to maintain the reduced state of SoxR.</text>
</comment>
<comment type="subunit">
    <text evidence="1">The complex is composed of six subunits: RsxA, RsxB, RsxC, RsxD, RsxE and RsxG.</text>
</comment>
<comment type="subcellular location">
    <subcellularLocation>
        <location evidence="1">Cell inner membrane</location>
        <topology evidence="1">Multi-pass membrane protein</topology>
    </subcellularLocation>
</comment>
<comment type="similarity">
    <text evidence="1">Belongs to the NqrDE/RnfAE family.</text>
</comment>
<proteinExistence type="inferred from homology"/>
<evidence type="ECO:0000255" key="1">
    <source>
        <dbReference type="HAMAP-Rule" id="MF_00478"/>
    </source>
</evidence>
<reference key="1">
    <citation type="submission" date="2008-02" db="EMBL/GenBank/DDBJ databases">
        <title>Complete sequence of Escherichia coli C str. ATCC 8739.</title>
        <authorList>
            <person name="Copeland A."/>
            <person name="Lucas S."/>
            <person name="Lapidus A."/>
            <person name="Glavina del Rio T."/>
            <person name="Dalin E."/>
            <person name="Tice H."/>
            <person name="Bruce D."/>
            <person name="Goodwin L."/>
            <person name="Pitluck S."/>
            <person name="Kiss H."/>
            <person name="Brettin T."/>
            <person name="Detter J.C."/>
            <person name="Han C."/>
            <person name="Kuske C.R."/>
            <person name="Schmutz J."/>
            <person name="Larimer F."/>
            <person name="Land M."/>
            <person name="Hauser L."/>
            <person name="Kyrpides N."/>
            <person name="Mikhailova N."/>
            <person name="Ingram L."/>
            <person name="Richardson P."/>
        </authorList>
    </citation>
    <scope>NUCLEOTIDE SEQUENCE [LARGE SCALE GENOMIC DNA]</scope>
    <source>
        <strain>ATCC 8739 / DSM 1576 / NBRC 3972 / NCIMB 8545 / WDCM 00012 / Crooks</strain>
    </source>
</reference>
<gene>
    <name evidence="1" type="primary">rsxE</name>
    <name type="ordered locus">EcolC_1997</name>
</gene>
<dbReference type="EC" id="7.-.-.-" evidence="1"/>
<dbReference type="EMBL" id="CP000946">
    <property type="protein sequence ID" value="ACA77643.1"/>
    <property type="molecule type" value="Genomic_DNA"/>
</dbReference>
<dbReference type="RefSeq" id="WP_001289652.1">
    <property type="nucleotide sequence ID" value="NZ_MTFT01000006.1"/>
</dbReference>
<dbReference type="SMR" id="B1IQC2"/>
<dbReference type="KEGG" id="ecl:EcolC_1997"/>
<dbReference type="HOGENOM" id="CLU_046659_1_0_6"/>
<dbReference type="GO" id="GO:0005886">
    <property type="term" value="C:plasma membrane"/>
    <property type="evidence" value="ECO:0007669"/>
    <property type="project" value="UniProtKB-SubCell"/>
</dbReference>
<dbReference type="GO" id="GO:0022900">
    <property type="term" value="P:electron transport chain"/>
    <property type="evidence" value="ECO:0007669"/>
    <property type="project" value="UniProtKB-UniRule"/>
</dbReference>
<dbReference type="HAMAP" id="MF_00478">
    <property type="entry name" value="RsxE_RnfE"/>
    <property type="match status" value="1"/>
</dbReference>
<dbReference type="InterPro" id="IPR003667">
    <property type="entry name" value="NqrDE/RnfAE"/>
</dbReference>
<dbReference type="InterPro" id="IPR010968">
    <property type="entry name" value="RnfE"/>
</dbReference>
<dbReference type="NCBIfam" id="NF009070">
    <property type="entry name" value="PRK12405.1"/>
    <property type="match status" value="1"/>
</dbReference>
<dbReference type="NCBIfam" id="TIGR01948">
    <property type="entry name" value="rnfE"/>
    <property type="match status" value="1"/>
</dbReference>
<dbReference type="PANTHER" id="PTHR30586">
    <property type="entry name" value="ELECTRON TRANSPORT COMPLEX PROTEIN RNFE"/>
    <property type="match status" value="1"/>
</dbReference>
<dbReference type="PANTHER" id="PTHR30586:SF0">
    <property type="entry name" value="ION-TRANSLOCATING OXIDOREDUCTASE COMPLEX SUBUNIT E"/>
    <property type="match status" value="1"/>
</dbReference>
<dbReference type="Pfam" id="PF02508">
    <property type="entry name" value="Rnf-Nqr"/>
    <property type="match status" value="1"/>
</dbReference>
<dbReference type="PIRSF" id="PIRSF006102">
    <property type="entry name" value="NQR_DE"/>
    <property type="match status" value="1"/>
</dbReference>
<organism>
    <name type="scientific">Escherichia coli (strain ATCC 8739 / DSM 1576 / NBRC 3972 / NCIMB 8545 / WDCM 00012 / Crooks)</name>
    <dbReference type="NCBI Taxonomy" id="481805"/>
    <lineage>
        <taxon>Bacteria</taxon>
        <taxon>Pseudomonadati</taxon>
        <taxon>Pseudomonadota</taxon>
        <taxon>Gammaproteobacteria</taxon>
        <taxon>Enterobacterales</taxon>
        <taxon>Enterobacteriaceae</taxon>
        <taxon>Escherichia</taxon>
    </lineage>
</organism>
<sequence length="231" mass="24459">MSEIKDVIVQGLWKNNSALVQLLGLCPLLAVTSTATNALGLGLATTLVLTLTNLTISTLRHWTPAEIRIPIYVMIIASVVSAVQMLINAYAFGLYQSLGIFIPLIVTNCIVVGRAEAFAAKKGPALSALDGFSIGMGATCAMFVLGSLREIIGNGTLFDGADALLGSWAKVLRVEIFHTDSPFLLAMLPPGAFIGLGLMLAGKYLIDERMKKRRAEAAAERALPNGETGNV</sequence>